<feature type="chain" id="PRO_0000402881" description="Translation factor GUF1, mitochondrial">
    <location>
        <begin position="1"/>
        <end position="653"/>
    </location>
</feature>
<feature type="domain" description="tr-type G">
    <location>
        <begin position="56"/>
        <end position="236"/>
    </location>
</feature>
<feature type="binding site" evidence="1">
    <location>
        <begin position="65"/>
        <end position="72"/>
    </location>
    <ligand>
        <name>GTP</name>
        <dbReference type="ChEBI" id="CHEBI:37565"/>
    </ligand>
</feature>
<feature type="binding site" evidence="1">
    <location>
        <begin position="129"/>
        <end position="133"/>
    </location>
    <ligand>
        <name>GTP</name>
        <dbReference type="ChEBI" id="CHEBI:37565"/>
    </ligand>
</feature>
<feature type="binding site" evidence="1">
    <location>
        <begin position="183"/>
        <end position="186"/>
    </location>
    <ligand>
        <name>GTP</name>
        <dbReference type="ChEBI" id="CHEBI:37565"/>
    </ligand>
</feature>
<organism>
    <name type="scientific">Candida tropicalis (strain ATCC MYA-3404 / T1)</name>
    <name type="common">Yeast</name>
    <dbReference type="NCBI Taxonomy" id="294747"/>
    <lineage>
        <taxon>Eukaryota</taxon>
        <taxon>Fungi</taxon>
        <taxon>Dikarya</taxon>
        <taxon>Ascomycota</taxon>
        <taxon>Saccharomycotina</taxon>
        <taxon>Pichiomycetes</taxon>
        <taxon>Debaryomycetaceae</taxon>
        <taxon>Candida/Lodderomyces clade</taxon>
        <taxon>Candida</taxon>
    </lineage>
</organism>
<keyword id="KW-0342">GTP-binding</keyword>
<keyword id="KW-0378">Hydrolase</keyword>
<keyword id="KW-0472">Membrane</keyword>
<keyword id="KW-0496">Mitochondrion</keyword>
<keyword id="KW-0999">Mitochondrion inner membrane</keyword>
<keyword id="KW-0547">Nucleotide-binding</keyword>
<keyword id="KW-0648">Protein biosynthesis</keyword>
<keyword id="KW-1185">Reference proteome</keyword>
<gene>
    <name evidence="1" type="primary">GUF1</name>
    <name type="ORF">CTRG_01489</name>
</gene>
<proteinExistence type="inferred from homology"/>
<dbReference type="EC" id="3.6.5.-"/>
<dbReference type="EMBL" id="GG692396">
    <property type="protein sequence ID" value="EER34628.1"/>
    <property type="molecule type" value="Genomic_DNA"/>
</dbReference>
<dbReference type="RefSeq" id="XP_002547183.1">
    <property type="nucleotide sequence ID" value="XM_002547137.1"/>
</dbReference>
<dbReference type="SMR" id="C5M6K8"/>
<dbReference type="STRING" id="294747.C5M6K8"/>
<dbReference type="EnsemblFungi" id="CTRG_01489-t43_1">
    <property type="protein sequence ID" value="CTRG_01489-t43_1-p1"/>
    <property type="gene ID" value="CTRG_01489"/>
</dbReference>
<dbReference type="GeneID" id="8301377"/>
<dbReference type="KEGG" id="ctp:CTRG_01489"/>
<dbReference type="VEuPathDB" id="FungiDB:CTRG_01489"/>
<dbReference type="eggNOG" id="KOG0462">
    <property type="taxonomic scope" value="Eukaryota"/>
</dbReference>
<dbReference type="HOGENOM" id="CLU_009995_3_1_1"/>
<dbReference type="OrthoDB" id="1074at2759"/>
<dbReference type="Proteomes" id="UP000002037">
    <property type="component" value="Unassembled WGS sequence"/>
</dbReference>
<dbReference type="GO" id="GO:0005743">
    <property type="term" value="C:mitochondrial inner membrane"/>
    <property type="evidence" value="ECO:0007669"/>
    <property type="project" value="UniProtKB-SubCell"/>
</dbReference>
<dbReference type="GO" id="GO:0005759">
    <property type="term" value="C:mitochondrial matrix"/>
    <property type="evidence" value="ECO:0007669"/>
    <property type="project" value="UniProtKB-UniRule"/>
</dbReference>
<dbReference type="GO" id="GO:0005525">
    <property type="term" value="F:GTP binding"/>
    <property type="evidence" value="ECO:0007669"/>
    <property type="project" value="UniProtKB-UniRule"/>
</dbReference>
<dbReference type="GO" id="GO:0003924">
    <property type="term" value="F:GTPase activity"/>
    <property type="evidence" value="ECO:0007669"/>
    <property type="project" value="UniProtKB-UniRule"/>
</dbReference>
<dbReference type="GO" id="GO:0097177">
    <property type="term" value="F:mitochondrial ribosome binding"/>
    <property type="evidence" value="ECO:0007669"/>
    <property type="project" value="TreeGrafter"/>
</dbReference>
<dbReference type="GO" id="GO:0045727">
    <property type="term" value="P:positive regulation of translation"/>
    <property type="evidence" value="ECO:0007669"/>
    <property type="project" value="UniProtKB-UniRule"/>
</dbReference>
<dbReference type="GO" id="GO:0006412">
    <property type="term" value="P:translation"/>
    <property type="evidence" value="ECO:0007669"/>
    <property type="project" value="UniProtKB-KW"/>
</dbReference>
<dbReference type="CDD" id="cd03699">
    <property type="entry name" value="EF4_II"/>
    <property type="match status" value="1"/>
</dbReference>
<dbReference type="CDD" id="cd16260">
    <property type="entry name" value="EF4_III"/>
    <property type="match status" value="1"/>
</dbReference>
<dbReference type="CDD" id="cd01890">
    <property type="entry name" value="LepA"/>
    <property type="match status" value="1"/>
</dbReference>
<dbReference type="CDD" id="cd03709">
    <property type="entry name" value="lepA_C"/>
    <property type="match status" value="1"/>
</dbReference>
<dbReference type="FunFam" id="3.40.50.300:FF:000078">
    <property type="entry name" value="Elongation factor 4"/>
    <property type="match status" value="1"/>
</dbReference>
<dbReference type="FunFam" id="2.40.30.10:FF:000015">
    <property type="entry name" value="Translation factor GUF1, mitochondrial"/>
    <property type="match status" value="1"/>
</dbReference>
<dbReference type="FunFam" id="3.30.70.240:FF:000007">
    <property type="entry name" value="Translation factor GUF1, mitochondrial"/>
    <property type="match status" value="1"/>
</dbReference>
<dbReference type="FunFam" id="3.30.70.2570:FF:000001">
    <property type="entry name" value="Translation factor GUF1, mitochondrial"/>
    <property type="match status" value="1"/>
</dbReference>
<dbReference type="FunFam" id="3.30.70.870:FF:000004">
    <property type="entry name" value="Translation factor GUF1, mitochondrial"/>
    <property type="match status" value="1"/>
</dbReference>
<dbReference type="Gene3D" id="3.30.70.240">
    <property type="match status" value="1"/>
</dbReference>
<dbReference type="Gene3D" id="3.30.70.2570">
    <property type="entry name" value="Elongation factor 4, C-terminal domain"/>
    <property type="match status" value="1"/>
</dbReference>
<dbReference type="Gene3D" id="3.30.70.870">
    <property type="entry name" value="Elongation Factor G (Translational Gtpase), domain 3"/>
    <property type="match status" value="1"/>
</dbReference>
<dbReference type="Gene3D" id="3.40.50.300">
    <property type="entry name" value="P-loop containing nucleotide triphosphate hydrolases"/>
    <property type="match status" value="1"/>
</dbReference>
<dbReference type="Gene3D" id="2.40.30.10">
    <property type="entry name" value="Translation factors"/>
    <property type="match status" value="1"/>
</dbReference>
<dbReference type="HAMAP" id="MF_00071">
    <property type="entry name" value="LepA"/>
    <property type="match status" value="1"/>
</dbReference>
<dbReference type="InterPro" id="IPR006297">
    <property type="entry name" value="EF-4"/>
</dbReference>
<dbReference type="InterPro" id="IPR035647">
    <property type="entry name" value="EFG_III/V"/>
</dbReference>
<dbReference type="InterPro" id="IPR000640">
    <property type="entry name" value="EFG_V-like"/>
</dbReference>
<dbReference type="InterPro" id="IPR004161">
    <property type="entry name" value="EFTu-like_2"/>
</dbReference>
<dbReference type="InterPro" id="IPR031157">
    <property type="entry name" value="G_TR_CS"/>
</dbReference>
<dbReference type="InterPro" id="IPR038363">
    <property type="entry name" value="LepA_C_sf"/>
</dbReference>
<dbReference type="InterPro" id="IPR013842">
    <property type="entry name" value="LepA_CTD"/>
</dbReference>
<dbReference type="InterPro" id="IPR035654">
    <property type="entry name" value="LepA_IV"/>
</dbReference>
<dbReference type="InterPro" id="IPR027417">
    <property type="entry name" value="P-loop_NTPase"/>
</dbReference>
<dbReference type="InterPro" id="IPR005225">
    <property type="entry name" value="Small_GTP-bd"/>
</dbReference>
<dbReference type="InterPro" id="IPR000795">
    <property type="entry name" value="T_Tr_GTP-bd_dom"/>
</dbReference>
<dbReference type="InterPro" id="IPR009000">
    <property type="entry name" value="Transl_B-barrel_sf"/>
</dbReference>
<dbReference type="NCBIfam" id="TIGR01393">
    <property type="entry name" value="lepA"/>
    <property type="match status" value="1"/>
</dbReference>
<dbReference type="NCBIfam" id="TIGR00231">
    <property type="entry name" value="small_GTP"/>
    <property type="match status" value="1"/>
</dbReference>
<dbReference type="PANTHER" id="PTHR43512:SF7">
    <property type="entry name" value="TRANSLATION FACTOR GUF1, MITOCHONDRIAL"/>
    <property type="match status" value="1"/>
</dbReference>
<dbReference type="PANTHER" id="PTHR43512">
    <property type="entry name" value="TRANSLATION FACTOR GUF1-RELATED"/>
    <property type="match status" value="1"/>
</dbReference>
<dbReference type="Pfam" id="PF00679">
    <property type="entry name" value="EFG_C"/>
    <property type="match status" value="1"/>
</dbReference>
<dbReference type="Pfam" id="PF00009">
    <property type="entry name" value="GTP_EFTU"/>
    <property type="match status" value="1"/>
</dbReference>
<dbReference type="Pfam" id="PF03144">
    <property type="entry name" value="GTP_EFTU_D2"/>
    <property type="match status" value="1"/>
</dbReference>
<dbReference type="Pfam" id="PF06421">
    <property type="entry name" value="LepA_C"/>
    <property type="match status" value="1"/>
</dbReference>
<dbReference type="PRINTS" id="PR00315">
    <property type="entry name" value="ELONGATNFCT"/>
</dbReference>
<dbReference type="SUPFAM" id="SSF54980">
    <property type="entry name" value="EF-G C-terminal domain-like"/>
    <property type="match status" value="2"/>
</dbReference>
<dbReference type="SUPFAM" id="SSF52540">
    <property type="entry name" value="P-loop containing nucleoside triphosphate hydrolases"/>
    <property type="match status" value="1"/>
</dbReference>
<dbReference type="SUPFAM" id="SSF50447">
    <property type="entry name" value="Translation proteins"/>
    <property type="match status" value="1"/>
</dbReference>
<dbReference type="PROSITE" id="PS00301">
    <property type="entry name" value="G_TR_1"/>
    <property type="match status" value="1"/>
</dbReference>
<dbReference type="PROSITE" id="PS51722">
    <property type="entry name" value="G_TR_2"/>
    <property type="match status" value="1"/>
</dbReference>
<accession>C5M6K8</accession>
<protein>
    <recommendedName>
        <fullName evidence="1">Translation factor GUF1, mitochondrial</fullName>
        <ecNumber>3.6.5.-</ecNumber>
    </recommendedName>
    <alternativeName>
        <fullName evidence="1">Elongation factor 4 homolog</fullName>
        <shortName evidence="1">EF-4</shortName>
    </alternativeName>
    <alternativeName>
        <fullName evidence="1">GTPase GUF1</fullName>
    </alternativeName>
    <alternativeName>
        <fullName evidence="1">Ribosomal back-translocase</fullName>
    </alternativeName>
</protein>
<evidence type="ECO:0000255" key="1">
    <source>
        <dbReference type="HAMAP-Rule" id="MF_03137"/>
    </source>
</evidence>
<evidence type="ECO:0000305" key="2"/>
<comment type="function">
    <text evidence="1">Promotes mitochondrial protein synthesis. May act as a fidelity factor of the translation reaction, by catalyzing a one-codon backward translocation of tRNAs on improperly translocated ribosomes. Binds to mitochondrial ribosomes in a GTP-dependent manner.</text>
</comment>
<comment type="catalytic activity">
    <reaction evidence="1">
        <text>GTP + H2O = GDP + phosphate + H(+)</text>
        <dbReference type="Rhea" id="RHEA:19669"/>
        <dbReference type="ChEBI" id="CHEBI:15377"/>
        <dbReference type="ChEBI" id="CHEBI:15378"/>
        <dbReference type="ChEBI" id="CHEBI:37565"/>
        <dbReference type="ChEBI" id="CHEBI:43474"/>
        <dbReference type="ChEBI" id="CHEBI:58189"/>
    </reaction>
</comment>
<comment type="subcellular location">
    <subcellularLocation>
        <location evidence="1">Mitochondrion inner membrane</location>
        <topology evidence="1">Peripheral membrane protein</topology>
        <orientation evidence="1">Matrix side</orientation>
    </subcellularLocation>
</comment>
<comment type="miscellaneous">
    <text evidence="1">This protein may be expected to contain an N-terminal transit peptide but none has been predicted.</text>
</comment>
<comment type="similarity">
    <text evidence="2">Belongs to the TRAFAC class translation factor GTPase superfamily. Classic translation factor GTPase family. LepA subfamily.</text>
</comment>
<sequence length="653" mass="73697">MLLRYRIPEILRIRSPLKKWYSTVKPMSAAEEMRLKISQEQTRKAIQERIDKIPIENYRNFSIVAHVDHGKSTLSDRLLELTGVIQPGMKAQVLDKLEVERERGITVKAQTVSMFYNDGNQDYLLHLVDTPGHVDFRAEVSRSYASCGGALLLVDASQGVQAQTVANFYLAYSMGLKLIPIINKIDLDSANIPGAMEQVETTFELDSNDCIAVSAKTGLNVEQIIPSIIKNIPAPNCDETKPLRALLVDSWHDPYVGVVMLLHIVDGKLKKGMKIVSAHSNKAYDVKEVGIMYPDRTPMDHIKAGQVAYIIPGMKNPREALVGDTFYQLGKSEGLEPLPGFEEPKPMVFVGAFPADGREFNAMDDQMQNLVLNDRAVTLEQETSNALGLGWRLGFLGSLHASVFKERLEKEYGAQIILTAPTVPYKIFYKNGTEKVITNPDEFPDNTRHHDVEKYLEPYVEAIMTVPEEYMGNVMTLCLNNRGEQKDIEYLTTGQVLLKYEIPLSQLVEDFFGKLKGCTKGYASLDYEEAGYKKSDIVKLELCVNGEPQDALTTIIHKSQAQARGKEYVSKFKKYLKNQLFEVAIQAKVNNKVVARETIKARRKDVTQRLHAADISRYKKLLERQKEGKKQMKATGKVHIKNDAYQAFLRRDD</sequence>
<name>GUF1_CANTT</name>
<reference key="1">
    <citation type="journal article" date="2009" name="Nature">
        <title>Evolution of pathogenicity and sexual reproduction in eight Candida genomes.</title>
        <authorList>
            <person name="Butler G."/>
            <person name="Rasmussen M.D."/>
            <person name="Lin M.F."/>
            <person name="Santos M.A.S."/>
            <person name="Sakthikumar S."/>
            <person name="Munro C.A."/>
            <person name="Rheinbay E."/>
            <person name="Grabherr M."/>
            <person name="Forche A."/>
            <person name="Reedy J.L."/>
            <person name="Agrafioti I."/>
            <person name="Arnaud M.B."/>
            <person name="Bates S."/>
            <person name="Brown A.J.P."/>
            <person name="Brunke S."/>
            <person name="Costanzo M.C."/>
            <person name="Fitzpatrick D.A."/>
            <person name="de Groot P.W.J."/>
            <person name="Harris D."/>
            <person name="Hoyer L.L."/>
            <person name="Hube B."/>
            <person name="Klis F.M."/>
            <person name="Kodira C."/>
            <person name="Lennard N."/>
            <person name="Logue M.E."/>
            <person name="Martin R."/>
            <person name="Neiman A.M."/>
            <person name="Nikolaou E."/>
            <person name="Quail M.A."/>
            <person name="Quinn J."/>
            <person name="Santos M.C."/>
            <person name="Schmitzberger F.F."/>
            <person name="Sherlock G."/>
            <person name="Shah P."/>
            <person name="Silverstein K.A.T."/>
            <person name="Skrzypek M.S."/>
            <person name="Soll D."/>
            <person name="Staggs R."/>
            <person name="Stansfield I."/>
            <person name="Stumpf M.P.H."/>
            <person name="Sudbery P.E."/>
            <person name="Srikantha T."/>
            <person name="Zeng Q."/>
            <person name="Berman J."/>
            <person name="Berriman M."/>
            <person name="Heitman J."/>
            <person name="Gow N.A.R."/>
            <person name="Lorenz M.C."/>
            <person name="Birren B.W."/>
            <person name="Kellis M."/>
            <person name="Cuomo C.A."/>
        </authorList>
    </citation>
    <scope>NUCLEOTIDE SEQUENCE [LARGE SCALE GENOMIC DNA]</scope>
    <source>
        <strain>ATCC MYA-3404 / T1</strain>
    </source>
</reference>